<protein>
    <recommendedName>
        <fullName evidence="1">tRNA-specific 2-thiouridylase MnmA</fullName>
        <ecNumber evidence="1">2.8.1.13</ecNumber>
    </recommendedName>
</protein>
<organism>
    <name type="scientific">Burkholderia vietnamiensis (strain G4 / LMG 22486)</name>
    <name type="common">Burkholderia cepacia (strain R1808)</name>
    <dbReference type="NCBI Taxonomy" id="269482"/>
    <lineage>
        <taxon>Bacteria</taxon>
        <taxon>Pseudomonadati</taxon>
        <taxon>Pseudomonadota</taxon>
        <taxon>Betaproteobacteria</taxon>
        <taxon>Burkholderiales</taxon>
        <taxon>Burkholderiaceae</taxon>
        <taxon>Burkholderia</taxon>
        <taxon>Burkholderia cepacia complex</taxon>
    </lineage>
</organism>
<proteinExistence type="inferred from homology"/>
<evidence type="ECO:0000255" key="1">
    <source>
        <dbReference type="HAMAP-Rule" id="MF_00144"/>
    </source>
</evidence>
<accession>A4JBM2</accession>
<dbReference type="EC" id="2.8.1.13" evidence="1"/>
<dbReference type="EMBL" id="CP000614">
    <property type="protein sequence ID" value="ABO53675.1"/>
    <property type="molecule type" value="Genomic_DNA"/>
</dbReference>
<dbReference type="SMR" id="A4JBM2"/>
<dbReference type="KEGG" id="bvi:Bcep1808_0663"/>
<dbReference type="eggNOG" id="COG0482">
    <property type="taxonomic scope" value="Bacteria"/>
</dbReference>
<dbReference type="HOGENOM" id="CLU_035188_1_0_4"/>
<dbReference type="Proteomes" id="UP000002287">
    <property type="component" value="Chromosome 1"/>
</dbReference>
<dbReference type="GO" id="GO:0005737">
    <property type="term" value="C:cytoplasm"/>
    <property type="evidence" value="ECO:0007669"/>
    <property type="project" value="UniProtKB-SubCell"/>
</dbReference>
<dbReference type="GO" id="GO:0005524">
    <property type="term" value="F:ATP binding"/>
    <property type="evidence" value="ECO:0007669"/>
    <property type="project" value="UniProtKB-KW"/>
</dbReference>
<dbReference type="GO" id="GO:0000049">
    <property type="term" value="F:tRNA binding"/>
    <property type="evidence" value="ECO:0007669"/>
    <property type="project" value="UniProtKB-KW"/>
</dbReference>
<dbReference type="GO" id="GO:0103016">
    <property type="term" value="F:tRNA-uridine 2-sulfurtransferase activity"/>
    <property type="evidence" value="ECO:0007669"/>
    <property type="project" value="UniProtKB-EC"/>
</dbReference>
<dbReference type="GO" id="GO:0002143">
    <property type="term" value="P:tRNA wobble position uridine thiolation"/>
    <property type="evidence" value="ECO:0007669"/>
    <property type="project" value="TreeGrafter"/>
</dbReference>
<dbReference type="CDD" id="cd01998">
    <property type="entry name" value="MnmA_TRMU-like"/>
    <property type="match status" value="1"/>
</dbReference>
<dbReference type="FunFam" id="2.30.30.280:FF:000001">
    <property type="entry name" value="tRNA-specific 2-thiouridylase MnmA"/>
    <property type="match status" value="1"/>
</dbReference>
<dbReference type="FunFam" id="2.40.30.10:FF:000023">
    <property type="entry name" value="tRNA-specific 2-thiouridylase MnmA"/>
    <property type="match status" value="1"/>
</dbReference>
<dbReference type="FunFam" id="3.40.50.620:FF:000004">
    <property type="entry name" value="tRNA-specific 2-thiouridylase MnmA"/>
    <property type="match status" value="1"/>
</dbReference>
<dbReference type="Gene3D" id="2.30.30.280">
    <property type="entry name" value="Adenine nucleotide alpha hydrolases-like domains"/>
    <property type="match status" value="1"/>
</dbReference>
<dbReference type="Gene3D" id="3.40.50.620">
    <property type="entry name" value="HUPs"/>
    <property type="match status" value="1"/>
</dbReference>
<dbReference type="Gene3D" id="2.40.30.10">
    <property type="entry name" value="Translation factors"/>
    <property type="match status" value="1"/>
</dbReference>
<dbReference type="HAMAP" id="MF_00144">
    <property type="entry name" value="tRNA_thiouridyl_MnmA"/>
    <property type="match status" value="1"/>
</dbReference>
<dbReference type="InterPro" id="IPR004506">
    <property type="entry name" value="MnmA-like"/>
</dbReference>
<dbReference type="InterPro" id="IPR046885">
    <property type="entry name" value="MnmA-like_C"/>
</dbReference>
<dbReference type="InterPro" id="IPR046884">
    <property type="entry name" value="MnmA-like_central"/>
</dbReference>
<dbReference type="InterPro" id="IPR023382">
    <property type="entry name" value="MnmA-like_central_sf"/>
</dbReference>
<dbReference type="InterPro" id="IPR014729">
    <property type="entry name" value="Rossmann-like_a/b/a_fold"/>
</dbReference>
<dbReference type="NCBIfam" id="NF001138">
    <property type="entry name" value="PRK00143.1"/>
    <property type="match status" value="1"/>
</dbReference>
<dbReference type="NCBIfam" id="TIGR00420">
    <property type="entry name" value="trmU"/>
    <property type="match status" value="1"/>
</dbReference>
<dbReference type="PANTHER" id="PTHR11933:SF5">
    <property type="entry name" value="MITOCHONDRIAL TRNA-SPECIFIC 2-THIOURIDYLASE 1"/>
    <property type="match status" value="1"/>
</dbReference>
<dbReference type="PANTHER" id="PTHR11933">
    <property type="entry name" value="TRNA 5-METHYLAMINOMETHYL-2-THIOURIDYLATE -METHYLTRANSFERASE"/>
    <property type="match status" value="1"/>
</dbReference>
<dbReference type="Pfam" id="PF03054">
    <property type="entry name" value="tRNA_Me_trans"/>
    <property type="match status" value="1"/>
</dbReference>
<dbReference type="Pfam" id="PF20258">
    <property type="entry name" value="tRNA_Me_trans_C"/>
    <property type="match status" value="1"/>
</dbReference>
<dbReference type="Pfam" id="PF20259">
    <property type="entry name" value="tRNA_Me_trans_M"/>
    <property type="match status" value="1"/>
</dbReference>
<dbReference type="SUPFAM" id="SSF52402">
    <property type="entry name" value="Adenine nucleotide alpha hydrolases-like"/>
    <property type="match status" value="1"/>
</dbReference>
<reference key="1">
    <citation type="submission" date="2007-03" db="EMBL/GenBank/DDBJ databases">
        <title>Complete sequence of chromosome 1 of Burkholderia vietnamiensis G4.</title>
        <authorList>
            <consortium name="US DOE Joint Genome Institute"/>
            <person name="Copeland A."/>
            <person name="Lucas S."/>
            <person name="Lapidus A."/>
            <person name="Barry K."/>
            <person name="Detter J.C."/>
            <person name="Glavina del Rio T."/>
            <person name="Hammon N."/>
            <person name="Israni S."/>
            <person name="Dalin E."/>
            <person name="Tice H."/>
            <person name="Pitluck S."/>
            <person name="Chain P."/>
            <person name="Malfatti S."/>
            <person name="Shin M."/>
            <person name="Vergez L."/>
            <person name="Schmutz J."/>
            <person name="Larimer F."/>
            <person name="Land M."/>
            <person name="Hauser L."/>
            <person name="Kyrpides N."/>
            <person name="Tiedje J."/>
            <person name="Richardson P."/>
        </authorList>
    </citation>
    <scope>NUCLEOTIDE SEQUENCE [LARGE SCALE GENOMIC DNA]</scope>
    <source>
        <strain>G4 / LMG 22486</strain>
    </source>
</reference>
<sequence>MSKRRVVVGMSGGVDSSVTAWLLKEQGYDVVGLFMKNWEDDDDGEYCSTRQDWIDVVSVADLIGIDVEAVNFAAEYKDRVFAEFLREYSAGRTPNPDVLCNAEIKFKAFLDHAMSLDAEMIATGHYARVRERDGRFELLKAFDHTKDQSYFLHRLNQAQLSKTMFPLGEMPKTKVREIAAQIGLPNAKKKDSTGICFIGERPFRDFLNRYLPTKPGPMKTPDGKRVGEHIGLAFYTFGQRKGIGLGGSKDGSGEPWFVAAKDIPSNTLYVVQGHDHPWLLSHELVAGNVSWVAGEPPADGFACGAKTRYRQADAACRFGAAAAGPAGEARFTLAFDDAQWAVTPGQSAVLYDGEICLGGGIIEHAASGRDAAAAAPAAALVEAR</sequence>
<gene>
    <name evidence="1" type="primary">mnmA</name>
    <name type="ordered locus">Bcep1808_0663</name>
</gene>
<feature type="chain" id="PRO_0000349565" description="tRNA-specific 2-thiouridylase MnmA">
    <location>
        <begin position="1"/>
        <end position="384"/>
    </location>
</feature>
<feature type="region of interest" description="Interaction with target base in tRNA" evidence="1">
    <location>
        <begin position="95"/>
        <end position="97"/>
    </location>
</feature>
<feature type="region of interest" description="Interaction with tRNA" evidence="1">
    <location>
        <begin position="146"/>
        <end position="148"/>
    </location>
</feature>
<feature type="region of interest" description="Interaction with tRNA" evidence="1">
    <location>
        <begin position="308"/>
        <end position="309"/>
    </location>
</feature>
<feature type="active site" description="Nucleophile" evidence="1">
    <location>
        <position position="100"/>
    </location>
</feature>
<feature type="active site" description="Cysteine persulfide intermediate" evidence="1">
    <location>
        <position position="196"/>
    </location>
</feature>
<feature type="binding site" evidence="1">
    <location>
        <begin position="9"/>
        <end position="16"/>
    </location>
    <ligand>
        <name>ATP</name>
        <dbReference type="ChEBI" id="CHEBI:30616"/>
    </ligand>
</feature>
<feature type="binding site" evidence="1">
    <location>
        <position position="35"/>
    </location>
    <ligand>
        <name>ATP</name>
        <dbReference type="ChEBI" id="CHEBI:30616"/>
    </ligand>
</feature>
<feature type="binding site" evidence="1">
    <location>
        <position position="124"/>
    </location>
    <ligand>
        <name>ATP</name>
        <dbReference type="ChEBI" id="CHEBI:30616"/>
    </ligand>
</feature>
<feature type="site" description="Interaction with tRNA" evidence="1">
    <location>
        <position position="125"/>
    </location>
</feature>
<feature type="site" description="Interaction with tRNA" evidence="1">
    <location>
        <position position="346"/>
    </location>
</feature>
<feature type="disulfide bond" description="Alternate" evidence="1">
    <location>
        <begin position="100"/>
        <end position="196"/>
    </location>
</feature>
<name>MNMA_BURVG</name>
<keyword id="KW-0067">ATP-binding</keyword>
<keyword id="KW-0963">Cytoplasm</keyword>
<keyword id="KW-1015">Disulfide bond</keyword>
<keyword id="KW-0547">Nucleotide-binding</keyword>
<keyword id="KW-0694">RNA-binding</keyword>
<keyword id="KW-0808">Transferase</keyword>
<keyword id="KW-0819">tRNA processing</keyword>
<keyword id="KW-0820">tRNA-binding</keyword>
<comment type="function">
    <text evidence="1">Catalyzes the 2-thiolation of uridine at the wobble position (U34) of tRNA, leading to the formation of s(2)U34.</text>
</comment>
<comment type="catalytic activity">
    <reaction evidence="1">
        <text>S-sulfanyl-L-cysteinyl-[protein] + uridine(34) in tRNA + AH2 + ATP = 2-thiouridine(34) in tRNA + L-cysteinyl-[protein] + A + AMP + diphosphate + H(+)</text>
        <dbReference type="Rhea" id="RHEA:47032"/>
        <dbReference type="Rhea" id="RHEA-COMP:10131"/>
        <dbReference type="Rhea" id="RHEA-COMP:11726"/>
        <dbReference type="Rhea" id="RHEA-COMP:11727"/>
        <dbReference type="Rhea" id="RHEA-COMP:11728"/>
        <dbReference type="ChEBI" id="CHEBI:13193"/>
        <dbReference type="ChEBI" id="CHEBI:15378"/>
        <dbReference type="ChEBI" id="CHEBI:17499"/>
        <dbReference type="ChEBI" id="CHEBI:29950"/>
        <dbReference type="ChEBI" id="CHEBI:30616"/>
        <dbReference type="ChEBI" id="CHEBI:33019"/>
        <dbReference type="ChEBI" id="CHEBI:61963"/>
        <dbReference type="ChEBI" id="CHEBI:65315"/>
        <dbReference type="ChEBI" id="CHEBI:87170"/>
        <dbReference type="ChEBI" id="CHEBI:456215"/>
        <dbReference type="EC" id="2.8.1.13"/>
    </reaction>
</comment>
<comment type="subcellular location">
    <subcellularLocation>
        <location evidence="1">Cytoplasm</location>
    </subcellularLocation>
</comment>
<comment type="similarity">
    <text evidence="1">Belongs to the MnmA/TRMU family.</text>
</comment>